<name>UB2R2_HUMAN</name>
<proteinExistence type="evidence at protein level"/>
<organism>
    <name type="scientific">Homo sapiens</name>
    <name type="common">Human</name>
    <dbReference type="NCBI Taxonomy" id="9606"/>
    <lineage>
        <taxon>Eukaryota</taxon>
        <taxon>Metazoa</taxon>
        <taxon>Chordata</taxon>
        <taxon>Craniata</taxon>
        <taxon>Vertebrata</taxon>
        <taxon>Euteleostomi</taxon>
        <taxon>Mammalia</taxon>
        <taxon>Eutheria</taxon>
        <taxon>Euarchontoglires</taxon>
        <taxon>Primates</taxon>
        <taxon>Haplorrhini</taxon>
        <taxon>Catarrhini</taxon>
        <taxon>Hominidae</taxon>
        <taxon>Homo</taxon>
    </lineage>
</organism>
<keyword id="KW-0002">3D-structure</keyword>
<keyword id="KW-0067">ATP-binding</keyword>
<keyword id="KW-0547">Nucleotide-binding</keyword>
<keyword id="KW-0597">Phosphoprotein</keyword>
<keyword id="KW-1267">Proteomics identification</keyword>
<keyword id="KW-1185">Reference proteome</keyword>
<keyword id="KW-0808">Transferase</keyword>
<keyword id="KW-0833">Ubl conjugation pathway</keyword>
<accession>Q712K3</accession>
<accession>D3DRL5</accession>
<accession>Q9NX64</accession>
<protein>
    <recommendedName>
        <fullName>Ubiquitin-conjugating enzyme E2 R2</fullName>
        <ecNumber evidence="5 6">2.3.2.23</ecNumber>
    </recommendedName>
    <alternativeName>
        <fullName>E2 ubiquitin-conjugating enzyme R2</fullName>
    </alternativeName>
    <alternativeName>
        <fullName>Ubiquitin carrier protein R2</fullName>
    </alternativeName>
    <alternativeName>
        <fullName>Ubiquitin-conjugating enzyme E2-CDC34B</fullName>
    </alternativeName>
    <alternativeName>
        <fullName>Ubiquitin-protein ligase R2</fullName>
    </alternativeName>
</protein>
<sequence>MAQQQMTSSQKALMLELKSLQEEPVEGFRITLVDESDLYNWEVAIFGPPNTLYEGGYFKAHIKFPIDYPYSPPTFRFLTKMWHPNIYENGDVCISILHPPVDDPQSGELPSERWNPTQNVRTILLSVISLLNEPNTFSPANVDASVMFRKWRDSKGKDKEYAEIIRKQVSATKAEAEKDGVKVPTTLAEYCIKTKVPSNDNSSDLLYDDLYDDDIDDEDEEEEDADCYDDDDSGNEES</sequence>
<evidence type="ECO:0000255" key="1">
    <source>
        <dbReference type="PROSITE-ProRule" id="PRU00388"/>
    </source>
</evidence>
<evidence type="ECO:0000255" key="2">
    <source>
        <dbReference type="PROSITE-ProRule" id="PRU10133"/>
    </source>
</evidence>
<evidence type="ECO:0000256" key="3">
    <source>
        <dbReference type="SAM" id="MobiDB-lite"/>
    </source>
</evidence>
<evidence type="ECO:0000269" key="4">
    <source>
    </source>
</evidence>
<evidence type="ECO:0000269" key="5">
    <source>
    </source>
</evidence>
<evidence type="ECO:0000269" key="6">
    <source>
    </source>
</evidence>
<evidence type="ECO:0000305" key="7"/>
<evidence type="ECO:0007744" key="8">
    <source>
        <dbReference type="PDB" id="8PQL"/>
    </source>
</evidence>
<evidence type="ECO:0007744" key="9">
    <source>
    </source>
</evidence>
<evidence type="ECO:0007829" key="10">
    <source>
        <dbReference type="PDB" id="6NYO"/>
    </source>
</evidence>
<evidence type="ECO:0007829" key="11">
    <source>
        <dbReference type="PDB" id="8R5H"/>
    </source>
</evidence>
<gene>
    <name type="primary">UBE2R2</name>
    <name type="synonym">CDC34B</name>
    <name type="synonym">UBC3B</name>
</gene>
<feature type="chain" id="PRO_0000280513" description="Ubiquitin-conjugating enzyme E2 R2">
    <location>
        <begin position="1"/>
        <end position="238"/>
    </location>
</feature>
<feature type="domain" description="UBC core" evidence="1">
    <location>
        <begin position="8"/>
        <end position="174"/>
    </location>
</feature>
<feature type="region of interest" description="Important for ubiquitin transfer" evidence="6">
    <location>
        <begin position="98"/>
        <end position="113"/>
    </location>
</feature>
<feature type="region of interest" description="Disordered" evidence="3">
    <location>
        <begin position="194"/>
        <end position="238"/>
    </location>
</feature>
<feature type="compositionally biased region" description="Acidic residues" evidence="3">
    <location>
        <begin position="206"/>
        <end position="238"/>
    </location>
</feature>
<feature type="active site" description="Glycyl thioester intermediate" evidence="1 6 8">
    <location>
        <position position="93"/>
    </location>
</feature>
<feature type="modified residue" description="Phosphoserine; by CK2" evidence="4 9">
    <location>
        <position position="233"/>
    </location>
</feature>
<feature type="mutagenesis site" description="Loss of function." evidence="4">
    <original>C</original>
    <variation>S</variation>
    <location>
        <position position="93"/>
    </location>
</feature>
<feature type="mutagenesis site" description="Loss of function." evidence="4">
    <original>L</original>
    <variation>S</variation>
    <location>
        <position position="97"/>
    </location>
</feature>
<feature type="mutagenesis site" description="Impairs polyubiquitin-chain formation." evidence="6">
    <original>H</original>
    <variation>A</variation>
    <location>
        <position position="98"/>
    </location>
</feature>
<feature type="mutagenesis site" description="Decrease in substrate affinity and ubiquitin transfer rate for neddylated CRL2(FEM1C)-UBE2R2 complex; when associated with A-103." evidence="6">
    <original>D</original>
    <variation>A</variation>
    <location>
        <position position="102"/>
    </location>
</feature>
<feature type="mutagenesis site" description="Impairs polyubiquitin-chain formation. Decrease in substrate affinity and ubiquitin transfer rate for neddylated CRL2(FEM1C)-UBE2R2 complex. Decrease in substrate affinity and ubiquitin transfer rate for neddylated CRL2(FEM1C)-UBE2R2 complex; when associated with A-102." evidence="6">
    <original>D</original>
    <variation>A</variation>
    <location>
        <position position="103"/>
    </location>
</feature>
<feature type="mutagenesis site" description="Impairs polyubiquitin-chain formation. Decrease in substrate affinity." evidence="6">
    <original>S</original>
    <variation>A</variation>
    <location>
        <position position="106"/>
    </location>
</feature>
<feature type="mutagenesis site" description="Decrease in substrate affinity and ubiquitin transfer rate for neddylated CRL2(FEM1C)-UBE2R2 complex." evidence="6">
    <original>S</original>
    <variation>R</variation>
    <location>
        <position position="106"/>
    </location>
</feature>
<feature type="mutagenesis site" description="Impairs polyubiquitin-chain formation. Decrease in substrate affinity and ubiquitin transfer rate for neddylated CRL2(FEM1C)-UBE2R2 complex. Decrease in substrate affinity and ubiquitin transfer rate for neddylated CRL2(FEM1C)-UBE2R2 complex; when associated with A-112." evidence="6">
    <original>E</original>
    <variation>A</variation>
    <location>
        <position position="108"/>
    </location>
</feature>
<feature type="mutagenesis site" description="Decrease in substrate affinity and ubiquitin transfer rate for neddylated CRL2(FEM1C)-UBE2R2 complex." evidence="6">
    <original>E</original>
    <variation>R</variation>
    <location>
        <position position="108"/>
    </location>
</feature>
<feature type="mutagenesis site" description="Impairs polyubiquitin-chain formation. Decrease in substrate affinity and ubiquitin transfer rate for neddylated CRL2(FEM1C)-UBE2R2 complex. Decrease in substrate affinity and ubiquitin transfer rate for neddylated CRL2(FEM1C)-UBE2R2 complex; when associated with A-108." evidence="6">
    <original>E</original>
    <variation>A</variation>
    <location>
        <position position="112"/>
    </location>
</feature>
<feature type="mutagenesis site" description="Impairs polyubiquitin-chain formation. Decrease in substrate affinity and ubiquitin transfer rate for neddylated CRL2(FEM1C)-UBE2R2 complex." evidence="6">
    <original>R</original>
    <variation>A</variation>
    <location>
        <position position="113"/>
    </location>
</feature>
<feature type="mutagenesis site" description="Decrease in substrate affinity and ubiquitin transfer rate for neddylated CRL2(FEM1C)-UBE2R2 complex." evidence="6">
    <original>D</original>
    <variation>K</variation>
    <location>
        <position position="143"/>
    </location>
</feature>
<feature type="mutagenesis site" description="Decrease in substrate affinity and ubiquitin transfer rate for neddylated CRL2(FEM1C)-UBE2R2 complex." evidence="6">
    <original>R</original>
    <variation>D</variation>
    <location>
        <position position="149"/>
    </location>
</feature>
<feature type="mutagenesis site" description="Abolishes phosphorylation by CK2." evidence="4">
    <original>S</original>
    <variation>A</variation>
    <location>
        <position position="233"/>
    </location>
</feature>
<feature type="sequence conflict" description="In Ref. 2; BAA91156." evidence="7" ref="2">
    <original>Y</original>
    <variation>H</variation>
    <location>
        <position position="39"/>
    </location>
</feature>
<feature type="sequence conflict" description="In Ref. 2; BAA91156." evidence="7" ref="2">
    <original>V</original>
    <variation>A</variation>
    <location>
        <position position="127"/>
    </location>
</feature>
<feature type="helix" evidence="10">
    <location>
        <begin position="8"/>
        <end position="22"/>
    </location>
</feature>
<feature type="strand" evidence="10">
    <location>
        <begin position="28"/>
        <end position="34"/>
    </location>
</feature>
<feature type="strand" evidence="11">
    <location>
        <begin position="35"/>
        <end position="37"/>
    </location>
</feature>
<feature type="strand" evidence="10">
    <location>
        <begin position="40"/>
        <end position="46"/>
    </location>
</feature>
<feature type="turn" evidence="10">
    <location>
        <begin position="52"/>
        <end position="55"/>
    </location>
</feature>
<feature type="strand" evidence="10">
    <location>
        <begin position="57"/>
        <end position="63"/>
    </location>
</feature>
<feature type="turn" evidence="10">
    <location>
        <begin position="66"/>
        <end position="69"/>
    </location>
</feature>
<feature type="strand" evidence="10">
    <location>
        <begin position="74"/>
        <end position="79"/>
    </location>
</feature>
<feature type="strand" evidence="10">
    <location>
        <begin position="90"/>
        <end position="92"/>
    </location>
</feature>
<feature type="helix" evidence="10">
    <location>
        <begin position="95"/>
        <end position="97"/>
    </location>
</feature>
<feature type="turn" evidence="10">
    <location>
        <begin position="104"/>
        <end position="106"/>
    </location>
</feature>
<feature type="helix" evidence="10">
    <location>
        <begin position="110"/>
        <end position="112"/>
    </location>
</feature>
<feature type="helix" evidence="10">
    <location>
        <begin position="120"/>
        <end position="132"/>
    </location>
</feature>
<feature type="strand" evidence="10">
    <location>
        <begin position="136"/>
        <end position="138"/>
    </location>
</feature>
<feature type="helix" evidence="10">
    <location>
        <begin position="142"/>
        <end position="153"/>
    </location>
</feature>
<feature type="turn" evidence="10">
    <location>
        <begin position="154"/>
        <end position="156"/>
    </location>
</feature>
<feature type="helix" evidence="10">
    <location>
        <begin position="160"/>
        <end position="171"/>
    </location>
</feature>
<feature type="helix" evidence="10">
    <location>
        <begin position="173"/>
        <end position="178"/>
    </location>
</feature>
<feature type="helix" evidence="10">
    <location>
        <begin position="187"/>
        <end position="190"/>
    </location>
</feature>
<reference key="1">
    <citation type="journal article" date="2002" name="Oncogene">
        <title>CK2-dependent phosphorylation of the E2 ubiquitin conjugating enzyme UBC3B induces its interaction with beta-TrCP and enhances beta-catenin degradation.</title>
        <authorList>
            <person name="Semplici F."/>
            <person name="Meggio F."/>
            <person name="Pinna L.A."/>
            <person name="Oliviero S."/>
        </authorList>
    </citation>
    <scope>NUCLEOTIDE SEQUENCE [MRNA]</scope>
    <scope>ENZYME ACTIVITY</scope>
    <scope>FUNCTION</scope>
    <scope>INTERACTION WITH BTRC</scope>
    <scope>PHOSPHORYLATION AT SER-233</scope>
    <scope>MUTAGENESIS OF CYS-93; LEU-97 AND SER-233</scope>
</reference>
<reference key="2">
    <citation type="journal article" date="2004" name="Nat. Genet.">
        <title>Complete sequencing and characterization of 21,243 full-length human cDNAs.</title>
        <authorList>
            <person name="Ota T."/>
            <person name="Suzuki Y."/>
            <person name="Nishikawa T."/>
            <person name="Otsuki T."/>
            <person name="Sugiyama T."/>
            <person name="Irie R."/>
            <person name="Wakamatsu A."/>
            <person name="Hayashi K."/>
            <person name="Sato H."/>
            <person name="Nagai K."/>
            <person name="Kimura K."/>
            <person name="Makita H."/>
            <person name="Sekine M."/>
            <person name="Obayashi M."/>
            <person name="Nishi T."/>
            <person name="Shibahara T."/>
            <person name="Tanaka T."/>
            <person name="Ishii S."/>
            <person name="Yamamoto J."/>
            <person name="Saito K."/>
            <person name="Kawai Y."/>
            <person name="Isono Y."/>
            <person name="Nakamura Y."/>
            <person name="Nagahari K."/>
            <person name="Murakami K."/>
            <person name="Yasuda T."/>
            <person name="Iwayanagi T."/>
            <person name="Wagatsuma M."/>
            <person name="Shiratori A."/>
            <person name="Sudo H."/>
            <person name="Hosoiri T."/>
            <person name="Kaku Y."/>
            <person name="Kodaira H."/>
            <person name="Kondo H."/>
            <person name="Sugawara M."/>
            <person name="Takahashi M."/>
            <person name="Kanda K."/>
            <person name="Yokoi T."/>
            <person name="Furuya T."/>
            <person name="Kikkawa E."/>
            <person name="Omura Y."/>
            <person name="Abe K."/>
            <person name="Kamihara K."/>
            <person name="Katsuta N."/>
            <person name="Sato K."/>
            <person name="Tanikawa M."/>
            <person name="Yamazaki M."/>
            <person name="Ninomiya K."/>
            <person name="Ishibashi T."/>
            <person name="Yamashita H."/>
            <person name="Murakawa K."/>
            <person name="Fujimori K."/>
            <person name="Tanai H."/>
            <person name="Kimata M."/>
            <person name="Watanabe M."/>
            <person name="Hiraoka S."/>
            <person name="Chiba Y."/>
            <person name="Ishida S."/>
            <person name="Ono Y."/>
            <person name="Takiguchi S."/>
            <person name="Watanabe S."/>
            <person name="Yosida M."/>
            <person name="Hotuta T."/>
            <person name="Kusano J."/>
            <person name="Kanehori K."/>
            <person name="Takahashi-Fujii A."/>
            <person name="Hara H."/>
            <person name="Tanase T.-O."/>
            <person name="Nomura Y."/>
            <person name="Togiya S."/>
            <person name="Komai F."/>
            <person name="Hara R."/>
            <person name="Takeuchi K."/>
            <person name="Arita M."/>
            <person name="Imose N."/>
            <person name="Musashino K."/>
            <person name="Yuuki H."/>
            <person name="Oshima A."/>
            <person name="Sasaki N."/>
            <person name="Aotsuka S."/>
            <person name="Yoshikawa Y."/>
            <person name="Matsunawa H."/>
            <person name="Ichihara T."/>
            <person name="Shiohata N."/>
            <person name="Sano S."/>
            <person name="Moriya S."/>
            <person name="Momiyama H."/>
            <person name="Satoh N."/>
            <person name="Takami S."/>
            <person name="Terashima Y."/>
            <person name="Suzuki O."/>
            <person name="Nakagawa S."/>
            <person name="Senoh A."/>
            <person name="Mizoguchi H."/>
            <person name="Goto Y."/>
            <person name="Shimizu F."/>
            <person name="Wakebe H."/>
            <person name="Hishigaki H."/>
            <person name="Watanabe T."/>
            <person name="Sugiyama A."/>
            <person name="Takemoto M."/>
            <person name="Kawakami B."/>
            <person name="Yamazaki M."/>
            <person name="Watanabe K."/>
            <person name="Kumagai A."/>
            <person name="Itakura S."/>
            <person name="Fukuzumi Y."/>
            <person name="Fujimori Y."/>
            <person name="Komiyama M."/>
            <person name="Tashiro H."/>
            <person name="Tanigami A."/>
            <person name="Fujiwara T."/>
            <person name="Ono T."/>
            <person name="Yamada K."/>
            <person name="Fujii Y."/>
            <person name="Ozaki K."/>
            <person name="Hirao M."/>
            <person name="Ohmori Y."/>
            <person name="Kawabata A."/>
            <person name="Hikiji T."/>
            <person name="Kobatake N."/>
            <person name="Inagaki H."/>
            <person name="Ikema Y."/>
            <person name="Okamoto S."/>
            <person name="Okitani R."/>
            <person name="Kawakami T."/>
            <person name="Noguchi S."/>
            <person name="Itoh T."/>
            <person name="Shigeta K."/>
            <person name="Senba T."/>
            <person name="Matsumura K."/>
            <person name="Nakajima Y."/>
            <person name="Mizuno T."/>
            <person name="Morinaga M."/>
            <person name="Sasaki M."/>
            <person name="Togashi T."/>
            <person name="Oyama M."/>
            <person name="Hata H."/>
            <person name="Watanabe M."/>
            <person name="Komatsu T."/>
            <person name="Mizushima-Sugano J."/>
            <person name="Satoh T."/>
            <person name="Shirai Y."/>
            <person name="Takahashi Y."/>
            <person name="Nakagawa K."/>
            <person name="Okumura K."/>
            <person name="Nagase T."/>
            <person name="Nomura N."/>
            <person name="Kikuchi H."/>
            <person name="Masuho Y."/>
            <person name="Yamashita R."/>
            <person name="Nakai K."/>
            <person name="Yada T."/>
            <person name="Nakamura Y."/>
            <person name="Ohara O."/>
            <person name="Isogai T."/>
            <person name="Sugano S."/>
        </authorList>
    </citation>
    <scope>NUCLEOTIDE SEQUENCE [LARGE SCALE MRNA]</scope>
    <source>
        <tissue>Carcinoma</tissue>
    </source>
</reference>
<reference key="3">
    <citation type="submission" date="2004-06" db="EMBL/GenBank/DDBJ databases">
        <title>Cloning of human full open reading frames in Gateway(TM) system entry vector (pDONR201).</title>
        <authorList>
            <person name="Ebert L."/>
            <person name="Schick M."/>
            <person name="Neubert P."/>
            <person name="Schatten R."/>
            <person name="Henze S."/>
            <person name="Korn B."/>
        </authorList>
    </citation>
    <scope>NUCLEOTIDE SEQUENCE [LARGE SCALE MRNA]</scope>
</reference>
<reference key="4">
    <citation type="journal article" date="2004" name="Nature">
        <title>DNA sequence and analysis of human chromosome 9.</title>
        <authorList>
            <person name="Humphray S.J."/>
            <person name="Oliver K."/>
            <person name="Hunt A.R."/>
            <person name="Plumb R.W."/>
            <person name="Loveland J.E."/>
            <person name="Howe K.L."/>
            <person name="Andrews T.D."/>
            <person name="Searle S."/>
            <person name="Hunt S.E."/>
            <person name="Scott C.E."/>
            <person name="Jones M.C."/>
            <person name="Ainscough R."/>
            <person name="Almeida J.P."/>
            <person name="Ambrose K.D."/>
            <person name="Ashwell R.I.S."/>
            <person name="Babbage A.K."/>
            <person name="Babbage S."/>
            <person name="Bagguley C.L."/>
            <person name="Bailey J."/>
            <person name="Banerjee R."/>
            <person name="Barker D.J."/>
            <person name="Barlow K.F."/>
            <person name="Bates K."/>
            <person name="Beasley H."/>
            <person name="Beasley O."/>
            <person name="Bird C.P."/>
            <person name="Bray-Allen S."/>
            <person name="Brown A.J."/>
            <person name="Brown J.Y."/>
            <person name="Burford D."/>
            <person name="Burrill W."/>
            <person name="Burton J."/>
            <person name="Carder C."/>
            <person name="Carter N.P."/>
            <person name="Chapman J.C."/>
            <person name="Chen Y."/>
            <person name="Clarke G."/>
            <person name="Clark S.Y."/>
            <person name="Clee C.M."/>
            <person name="Clegg S."/>
            <person name="Collier R.E."/>
            <person name="Corby N."/>
            <person name="Crosier M."/>
            <person name="Cummings A.T."/>
            <person name="Davies J."/>
            <person name="Dhami P."/>
            <person name="Dunn M."/>
            <person name="Dutta I."/>
            <person name="Dyer L.W."/>
            <person name="Earthrowl M.E."/>
            <person name="Faulkner L."/>
            <person name="Fleming C.J."/>
            <person name="Frankish A."/>
            <person name="Frankland J.A."/>
            <person name="French L."/>
            <person name="Fricker D.G."/>
            <person name="Garner P."/>
            <person name="Garnett J."/>
            <person name="Ghori J."/>
            <person name="Gilbert J.G.R."/>
            <person name="Glison C."/>
            <person name="Grafham D.V."/>
            <person name="Gribble S."/>
            <person name="Griffiths C."/>
            <person name="Griffiths-Jones S."/>
            <person name="Grocock R."/>
            <person name="Guy J."/>
            <person name="Hall R.E."/>
            <person name="Hammond S."/>
            <person name="Harley J.L."/>
            <person name="Harrison E.S.I."/>
            <person name="Hart E.A."/>
            <person name="Heath P.D."/>
            <person name="Henderson C.D."/>
            <person name="Hopkins B.L."/>
            <person name="Howard P.J."/>
            <person name="Howden P.J."/>
            <person name="Huckle E."/>
            <person name="Johnson C."/>
            <person name="Johnson D."/>
            <person name="Joy A.A."/>
            <person name="Kay M."/>
            <person name="Keenan S."/>
            <person name="Kershaw J.K."/>
            <person name="Kimberley A.M."/>
            <person name="King A."/>
            <person name="Knights A."/>
            <person name="Laird G.K."/>
            <person name="Langford C."/>
            <person name="Lawlor S."/>
            <person name="Leongamornlert D.A."/>
            <person name="Leversha M."/>
            <person name="Lloyd C."/>
            <person name="Lloyd D.M."/>
            <person name="Lovell J."/>
            <person name="Martin S."/>
            <person name="Mashreghi-Mohammadi M."/>
            <person name="Matthews L."/>
            <person name="McLaren S."/>
            <person name="McLay K.E."/>
            <person name="McMurray A."/>
            <person name="Milne S."/>
            <person name="Nickerson T."/>
            <person name="Nisbett J."/>
            <person name="Nordsiek G."/>
            <person name="Pearce A.V."/>
            <person name="Peck A.I."/>
            <person name="Porter K.M."/>
            <person name="Pandian R."/>
            <person name="Pelan S."/>
            <person name="Phillimore B."/>
            <person name="Povey S."/>
            <person name="Ramsey Y."/>
            <person name="Rand V."/>
            <person name="Scharfe M."/>
            <person name="Sehra H.K."/>
            <person name="Shownkeen R."/>
            <person name="Sims S.K."/>
            <person name="Skuce C.D."/>
            <person name="Smith M."/>
            <person name="Steward C.A."/>
            <person name="Swarbreck D."/>
            <person name="Sycamore N."/>
            <person name="Tester J."/>
            <person name="Thorpe A."/>
            <person name="Tracey A."/>
            <person name="Tromans A."/>
            <person name="Thomas D.W."/>
            <person name="Wall M."/>
            <person name="Wallis J.M."/>
            <person name="West A.P."/>
            <person name="Whitehead S.L."/>
            <person name="Willey D.L."/>
            <person name="Williams S.A."/>
            <person name="Wilming L."/>
            <person name="Wray P.W."/>
            <person name="Young L."/>
            <person name="Ashurst J.L."/>
            <person name="Coulson A."/>
            <person name="Blocker H."/>
            <person name="Durbin R.M."/>
            <person name="Sulston J.E."/>
            <person name="Hubbard T."/>
            <person name="Jackson M.J."/>
            <person name="Bentley D.R."/>
            <person name="Beck S."/>
            <person name="Rogers J."/>
            <person name="Dunham I."/>
        </authorList>
    </citation>
    <scope>NUCLEOTIDE SEQUENCE [LARGE SCALE GENOMIC DNA]</scope>
</reference>
<reference key="5">
    <citation type="submission" date="2005-09" db="EMBL/GenBank/DDBJ databases">
        <authorList>
            <person name="Mural R.J."/>
            <person name="Istrail S."/>
            <person name="Sutton G.G."/>
            <person name="Florea L."/>
            <person name="Halpern A.L."/>
            <person name="Mobarry C.M."/>
            <person name="Lippert R."/>
            <person name="Walenz B."/>
            <person name="Shatkay H."/>
            <person name="Dew I."/>
            <person name="Miller J.R."/>
            <person name="Flanigan M.J."/>
            <person name="Edwards N.J."/>
            <person name="Bolanos R."/>
            <person name="Fasulo D."/>
            <person name="Halldorsson B.V."/>
            <person name="Hannenhalli S."/>
            <person name="Turner R."/>
            <person name="Yooseph S."/>
            <person name="Lu F."/>
            <person name="Nusskern D.R."/>
            <person name="Shue B.C."/>
            <person name="Zheng X.H."/>
            <person name="Zhong F."/>
            <person name="Delcher A.L."/>
            <person name="Huson D.H."/>
            <person name="Kravitz S.A."/>
            <person name="Mouchard L."/>
            <person name="Reinert K."/>
            <person name="Remington K.A."/>
            <person name="Clark A.G."/>
            <person name="Waterman M.S."/>
            <person name="Eichler E.E."/>
            <person name="Adams M.D."/>
            <person name="Hunkapiller M.W."/>
            <person name="Myers E.W."/>
            <person name="Venter J.C."/>
        </authorList>
    </citation>
    <scope>NUCLEOTIDE SEQUENCE [LARGE SCALE GENOMIC DNA]</scope>
</reference>
<reference key="6">
    <citation type="journal article" date="2004" name="Genome Res.">
        <title>The status, quality, and expansion of the NIH full-length cDNA project: the Mammalian Gene Collection (MGC).</title>
        <authorList>
            <consortium name="The MGC Project Team"/>
        </authorList>
    </citation>
    <scope>NUCLEOTIDE SEQUENCE [LARGE SCALE MRNA]</scope>
    <source>
        <tissue>Ovary</tissue>
        <tissue>Testis</tissue>
    </source>
</reference>
<reference key="7">
    <citation type="journal article" date="2008" name="Proc. Natl. Acad. Sci. U.S.A.">
        <title>A quantitative atlas of mitotic phosphorylation.</title>
        <authorList>
            <person name="Dephoure N."/>
            <person name="Zhou C."/>
            <person name="Villen J."/>
            <person name="Beausoleil S.A."/>
            <person name="Bakalarski C.E."/>
            <person name="Elledge S.J."/>
            <person name="Gygi S.P."/>
        </authorList>
    </citation>
    <scope>PHOSPHORYLATION [LARGE SCALE ANALYSIS] AT SER-233</scope>
    <scope>IDENTIFICATION BY MASS SPECTROMETRY [LARGE SCALE ANALYSIS]</scope>
    <source>
        <tissue>Cervix carcinoma</tissue>
    </source>
</reference>
<reference key="8">
    <citation type="journal article" date="2010" name="J. Biol. Chem.">
        <title>The E2 ubiquitin-conjugating enzymes direct polyubiquitination to preferred lysines.</title>
        <authorList>
            <person name="David Y."/>
            <person name="Ziv T."/>
            <person name="Admon A."/>
            <person name="Navon A."/>
        </authorList>
    </citation>
    <scope>FUNCTION</scope>
    <scope>CATALYTIC ACTIVITY</scope>
</reference>
<reference key="9">
    <citation type="journal article" date="2011" name="BMC Syst. Biol.">
        <title>Initial characterization of the human central proteome.</title>
        <authorList>
            <person name="Burkard T.R."/>
            <person name="Planyavsky M."/>
            <person name="Kaupe I."/>
            <person name="Breitwieser F.P."/>
            <person name="Buerckstuemmer T."/>
            <person name="Bennett K.L."/>
            <person name="Superti-Furga G."/>
            <person name="Colinge J."/>
        </authorList>
    </citation>
    <scope>IDENTIFICATION BY MASS SPECTROMETRY [LARGE SCALE ANALYSIS]</scope>
</reference>
<reference evidence="8" key="10">
    <citation type="journal article" date="2024" name="Nat. Struct. Mol. Biol.">
        <title>Mechanism of millisecond Lys48-linked poly-ubiquitin chain formation by cullin-RING ligases.</title>
        <authorList>
            <person name="Liwocha J."/>
            <person name="Li J."/>
            <person name="Purser N."/>
            <person name="Rattanasopa C."/>
            <person name="Maiwald S."/>
            <person name="Krist D.T."/>
            <person name="Scott D.C."/>
            <person name="Steigenberger B."/>
            <person name="Prabu J.R."/>
            <person name="Schulman B.A."/>
            <person name="Kleiger G."/>
        </authorList>
    </citation>
    <scope>STRUCTURE BY ELECTRON MICROSCOPY (3.76 ANGSTROMS) IN COMPLEX WITH CRL2(FEM1C) COMPLEX</scope>
    <scope>FUNCTION</scope>
    <scope>CATALYTIC ACTIVITY</scope>
    <scope>ACTIVITY REGULATION</scope>
    <scope>BIOPHYSICOCHEMICAL PROPERTIES</scope>
    <scope>PATHWAY</scope>
    <scope>SUBUNIT</scope>
    <scope>ACTIVE SITE</scope>
    <scope>MUTAGENESIS OF HIS-98; ASP-102; ASP-103; SER-106; GLU-108; GLU-112; ARG-113; ASP-143 AND ARG-149</scope>
</reference>
<dbReference type="EC" id="2.3.2.23" evidence="5 6"/>
<dbReference type="EMBL" id="AJ240087">
    <property type="protein sequence ID" value="CAC80336.1"/>
    <property type="molecule type" value="mRNA"/>
</dbReference>
<dbReference type="EMBL" id="AK000426">
    <property type="protein sequence ID" value="BAA91156.1"/>
    <property type="molecule type" value="mRNA"/>
</dbReference>
<dbReference type="EMBL" id="CR457233">
    <property type="protein sequence ID" value="CAG33514.1"/>
    <property type="molecule type" value="mRNA"/>
</dbReference>
<dbReference type="EMBL" id="AL139113">
    <property type="status" value="NOT_ANNOTATED_CDS"/>
    <property type="molecule type" value="Genomic_DNA"/>
</dbReference>
<dbReference type="EMBL" id="CH471071">
    <property type="protein sequence ID" value="EAW58479.1"/>
    <property type="molecule type" value="Genomic_DNA"/>
</dbReference>
<dbReference type="EMBL" id="CH471071">
    <property type="protein sequence ID" value="EAW58480.1"/>
    <property type="molecule type" value="Genomic_DNA"/>
</dbReference>
<dbReference type="EMBL" id="BC004862">
    <property type="protein sequence ID" value="AAH04862.1"/>
    <property type="molecule type" value="mRNA"/>
</dbReference>
<dbReference type="EMBL" id="BC047584">
    <property type="protein sequence ID" value="AAH47584.1"/>
    <property type="molecule type" value="mRNA"/>
</dbReference>
<dbReference type="CCDS" id="CCDS6546.1"/>
<dbReference type="RefSeq" id="NP_060281.2">
    <property type="nucleotide sequence ID" value="NM_017811.3"/>
</dbReference>
<dbReference type="PDB" id="6NYO">
    <property type="method" value="X-ray"/>
    <property type="resolution" value="1.50 A"/>
    <property type="chains" value="A=1-202"/>
</dbReference>
<dbReference type="PDB" id="8PQL">
    <property type="method" value="EM"/>
    <property type="resolution" value="3.76 A"/>
    <property type="chains" value="C=1-238"/>
</dbReference>
<dbReference type="PDB" id="8Q7R">
    <property type="method" value="EM"/>
    <property type="resolution" value="3.71 A"/>
    <property type="chains" value="C=1-238"/>
</dbReference>
<dbReference type="PDB" id="8R5H">
    <property type="method" value="EM"/>
    <property type="resolution" value="3.44 A"/>
    <property type="chains" value="C=1-192"/>
</dbReference>
<dbReference type="PDBsum" id="6NYO"/>
<dbReference type="PDBsum" id="8PQL"/>
<dbReference type="PDBsum" id="8Q7R"/>
<dbReference type="PDBsum" id="8R5H"/>
<dbReference type="EMDB" id="EMD-17822"/>
<dbReference type="EMDB" id="EMD-18230"/>
<dbReference type="EMDB" id="EMD-18915"/>
<dbReference type="EMDB" id="EMD-19857"/>
<dbReference type="EMDB" id="EMD-19858"/>
<dbReference type="EMDB" id="EMD-19859"/>
<dbReference type="EMDB" id="EMD-19860"/>
<dbReference type="SMR" id="Q712K3"/>
<dbReference type="BioGRID" id="120266">
    <property type="interactions" value="70"/>
</dbReference>
<dbReference type="FunCoup" id="Q712K3">
    <property type="interactions" value="1478"/>
</dbReference>
<dbReference type="IntAct" id="Q712K3">
    <property type="interactions" value="31"/>
</dbReference>
<dbReference type="MINT" id="Q712K3"/>
<dbReference type="STRING" id="9606.ENSP00000263228"/>
<dbReference type="GlyCosmos" id="Q712K3">
    <property type="glycosylation" value="1 site, 1 glycan"/>
</dbReference>
<dbReference type="GlyGen" id="Q712K3">
    <property type="glycosylation" value="4 sites, 2 O-linked glycans (4 sites)"/>
</dbReference>
<dbReference type="iPTMnet" id="Q712K3"/>
<dbReference type="MetOSite" id="Q712K3"/>
<dbReference type="PhosphoSitePlus" id="Q712K3"/>
<dbReference type="SwissPalm" id="Q712K3"/>
<dbReference type="BioMuta" id="UBE2R2"/>
<dbReference type="DMDM" id="74749761"/>
<dbReference type="jPOST" id="Q712K3"/>
<dbReference type="MassIVE" id="Q712K3"/>
<dbReference type="PaxDb" id="9606-ENSP00000263228"/>
<dbReference type="PeptideAtlas" id="Q712K3"/>
<dbReference type="ProteomicsDB" id="68590"/>
<dbReference type="Pumba" id="Q712K3"/>
<dbReference type="Antibodypedia" id="25301">
    <property type="antibodies" value="165 antibodies from 30 providers"/>
</dbReference>
<dbReference type="DNASU" id="54926"/>
<dbReference type="Ensembl" id="ENST00000263228.4">
    <property type="protein sequence ID" value="ENSP00000263228.3"/>
    <property type="gene ID" value="ENSG00000107341.5"/>
</dbReference>
<dbReference type="GeneID" id="54926"/>
<dbReference type="KEGG" id="hsa:54926"/>
<dbReference type="MANE-Select" id="ENST00000263228.4">
    <property type="protein sequence ID" value="ENSP00000263228.3"/>
    <property type="RefSeq nucleotide sequence ID" value="NM_017811.4"/>
    <property type="RefSeq protein sequence ID" value="NP_060281.2"/>
</dbReference>
<dbReference type="UCSC" id="uc003ztm.4">
    <property type="organism name" value="human"/>
</dbReference>
<dbReference type="AGR" id="HGNC:19907"/>
<dbReference type="CTD" id="54926"/>
<dbReference type="DisGeNET" id="54926"/>
<dbReference type="GeneCards" id="UBE2R2"/>
<dbReference type="HGNC" id="HGNC:19907">
    <property type="gene designation" value="UBE2R2"/>
</dbReference>
<dbReference type="HPA" id="ENSG00000107341">
    <property type="expression patterns" value="Low tissue specificity"/>
</dbReference>
<dbReference type="MIM" id="612506">
    <property type="type" value="gene"/>
</dbReference>
<dbReference type="neXtProt" id="NX_Q712K3"/>
<dbReference type="OpenTargets" id="ENSG00000107341"/>
<dbReference type="PharmGKB" id="PA134946881"/>
<dbReference type="VEuPathDB" id="HostDB:ENSG00000107341"/>
<dbReference type="eggNOG" id="KOG0425">
    <property type="taxonomic scope" value="Eukaryota"/>
</dbReference>
<dbReference type="GeneTree" id="ENSGT00940000158828"/>
<dbReference type="HOGENOM" id="CLU_030988_1_2_1"/>
<dbReference type="InParanoid" id="Q712K3"/>
<dbReference type="OMA" id="WNPTQNI"/>
<dbReference type="OrthoDB" id="19692at2759"/>
<dbReference type="PAN-GO" id="Q712K3">
    <property type="GO annotations" value="3 GO annotations based on evolutionary models"/>
</dbReference>
<dbReference type="PhylomeDB" id="Q712K3"/>
<dbReference type="TreeFam" id="TF101107"/>
<dbReference type="BRENDA" id="2.3.2.23">
    <property type="organism ID" value="2681"/>
</dbReference>
<dbReference type="BRENDA" id="2.3.2.24">
    <property type="organism ID" value="2681"/>
</dbReference>
<dbReference type="PathwayCommons" id="Q712K3"/>
<dbReference type="Reactome" id="R-HSA-8866652">
    <property type="pathway name" value="Synthesis of active ubiquitin: roles of E1 and E2 enzymes"/>
</dbReference>
<dbReference type="Reactome" id="R-HSA-983168">
    <property type="pathway name" value="Antigen processing: Ubiquitination &amp; Proteasome degradation"/>
</dbReference>
<dbReference type="SignaLink" id="Q712K3"/>
<dbReference type="SIGNOR" id="Q712K3"/>
<dbReference type="UniPathway" id="UPA00143"/>
<dbReference type="BioGRID-ORCS" id="54926">
    <property type="hits" value="26 hits in 1165 CRISPR screens"/>
</dbReference>
<dbReference type="ChiTaRS" id="UBE2R2">
    <property type="organism name" value="human"/>
</dbReference>
<dbReference type="GeneWiki" id="UBE2R2"/>
<dbReference type="GenomeRNAi" id="54926"/>
<dbReference type="Pharos" id="Q712K3">
    <property type="development level" value="Tbio"/>
</dbReference>
<dbReference type="PRO" id="PR:Q712K3"/>
<dbReference type="Proteomes" id="UP000005640">
    <property type="component" value="Chromosome 9"/>
</dbReference>
<dbReference type="RNAct" id="Q712K3">
    <property type="molecule type" value="protein"/>
</dbReference>
<dbReference type="Bgee" id="ENSG00000107341">
    <property type="expression patterns" value="Expressed in sperm and 191 other cell types or tissues"/>
</dbReference>
<dbReference type="GO" id="GO:0005829">
    <property type="term" value="C:cytosol"/>
    <property type="evidence" value="ECO:0000304"/>
    <property type="project" value="Reactome"/>
</dbReference>
<dbReference type="GO" id="GO:0005524">
    <property type="term" value="F:ATP binding"/>
    <property type="evidence" value="ECO:0007669"/>
    <property type="project" value="UniProtKB-KW"/>
</dbReference>
<dbReference type="GO" id="GO:0061631">
    <property type="term" value="F:ubiquitin conjugating enzyme activity"/>
    <property type="evidence" value="ECO:0000314"/>
    <property type="project" value="MGI"/>
</dbReference>
<dbReference type="GO" id="GO:0004842">
    <property type="term" value="F:ubiquitin-protein transferase activity"/>
    <property type="evidence" value="ECO:0000314"/>
    <property type="project" value="UniProtKB"/>
</dbReference>
<dbReference type="GO" id="GO:0070936">
    <property type="term" value="P:protein K48-linked ubiquitination"/>
    <property type="evidence" value="ECO:0000314"/>
    <property type="project" value="UniProtKB"/>
</dbReference>
<dbReference type="GO" id="GO:0006513">
    <property type="term" value="P:protein monoubiquitination"/>
    <property type="evidence" value="ECO:0000314"/>
    <property type="project" value="UniProtKB"/>
</dbReference>
<dbReference type="GO" id="GO:0000209">
    <property type="term" value="P:protein polyubiquitination"/>
    <property type="evidence" value="ECO:0000318"/>
    <property type="project" value="GO_Central"/>
</dbReference>
<dbReference type="GO" id="GO:0006511">
    <property type="term" value="P:ubiquitin-dependent protein catabolic process"/>
    <property type="evidence" value="ECO:0000318"/>
    <property type="project" value="GO_Central"/>
</dbReference>
<dbReference type="CDD" id="cd23803">
    <property type="entry name" value="UBCc_UBE2R"/>
    <property type="match status" value="1"/>
</dbReference>
<dbReference type="FunFam" id="3.10.110.10:FF:000009">
    <property type="entry name" value="Ubiquitin-conjugating enzyme E2 R2"/>
    <property type="match status" value="1"/>
</dbReference>
<dbReference type="Gene3D" id="3.10.110.10">
    <property type="entry name" value="Ubiquitin Conjugating Enzyme"/>
    <property type="match status" value="1"/>
</dbReference>
<dbReference type="InterPro" id="IPR050113">
    <property type="entry name" value="Ub_conjugating_enzyme"/>
</dbReference>
<dbReference type="InterPro" id="IPR000608">
    <property type="entry name" value="UBQ-conjugat_E2_core"/>
</dbReference>
<dbReference type="InterPro" id="IPR023313">
    <property type="entry name" value="UBQ-conjugating_AS"/>
</dbReference>
<dbReference type="InterPro" id="IPR016135">
    <property type="entry name" value="UBQ-conjugating_enzyme/RWD"/>
</dbReference>
<dbReference type="PANTHER" id="PTHR24067">
    <property type="entry name" value="UBIQUITIN-CONJUGATING ENZYME E2"/>
    <property type="match status" value="1"/>
</dbReference>
<dbReference type="Pfam" id="PF00179">
    <property type="entry name" value="UQ_con"/>
    <property type="match status" value="1"/>
</dbReference>
<dbReference type="SMART" id="SM00212">
    <property type="entry name" value="UBCc"/>
    <property type="match status" value="1"/>
</dbReference>
<dbReference type="SUPFAM" id="SSF54495">
    <property type="entry name" value="UBC-like"/>
    <property type="match status" value="1"/>
</dbReference>
<dbReference type="PROSITE" id="PS00183">
    <property type="entry name" value="UBC_1"/>
    <property type="match status" value="1"/>
</dbReference>
<dbReference type="PROSITE" id="PS50127">
    <property type="entry name" value="UBC_2"/>
    <property type="match status" value="1"/>
</dbReference>
<comment type="function">
    <text evidence="4 5 6">E2 ubiquitin-conjugating enzyme that accepts ubiquitin from an E1 ubiquitin-activating protein, and catalyzes its covalent attachment to other proteins by an E3 ubiquitin-protein ligase complex (PubMed:12037680, PubMed:20061386, PubMed:38326650). In vitro catalyzes monoubiquitination and 'Lys-48'-linked polyubiquitination (PubMed:12037680, PubMed:20061386, PubMed:38326650). Works in collaboration with various Cul1-RING and Cul2-RING E3 ligase complexes (PubMed:38326650). May be involved in degradation of katenin (PubMed:12037680).</text>
</comment>
<comment type="catalytic activity">
    <reaction evidence="1 2 4 5 6">
        <text>S-ubiquitinyl-[E1 ubiquitin-activating enzyme]-L-cysteine + [E2 ubiquitin-conjugating enzyme]-L-cysteine = [E1 ubiquitin-activating enzyme]-L-cysteine + S-ubiquitinyl-[E2 ubiquitin-conjugating enzyme]-L-cysteine.</text>
        <dbReference type="EC" id="2.3.2.23"/>
    </reaction>
</comment>
<comment type="activity regulation">
    <text evidence="6">Neddylation of CUL2 in the CRL2(FEM1C) E3 ligase complex increases substrate affinity of UBE2R2 and the ubiquitin-transfer rate in the E2-E3 complex.</text>
</comment>
<comment type="biophysicochemical properties">
    <kinetics>
        <KM evidence="6">111 uM for acceptor ubiquitin</KM>
        <text evidence="6">Measured for E2-E3 complex composed of neddylated UBE2R2 and the CRL2(FEM1C) complex, using an 'Arg-48' donor ubiquitin.</text>
    </kinetics>
</comment>
<comment type="pathway">
    <text evidence="6">Protein modification; protein ubiquitination.</text>
</comment>
<comment type="subunit">
    <text evidence="4 6">Interacts with multiple Cul1-RING E3 ubiquitin-protein ligase complexes, also known as SCF (SKP1-CUL1-F-box protein) complexes, including SCF(FBXW7) and SCF(BTRC) (PubMed:38326650). Interacts with multiple Cul2-RING (CRL2) E3 ubiquitin-protein ligase complexes, also known as ECS (Elongin BC-CUL2/5-SOCS-box protein) complexes, including CRL2(FEM1C) and ECS(VHL) (PubMed:38326650). When phosphorylated, interacts with beta-TrCP (BTRC) (PubMed:12037680).</text>
</comment>
<comment type="interaction">
    <interactant intactId="EBI-2340879">
        <id>Q712K3</id>
    </interactant>
    <interactant intactId="EBI-743771">
        <id>Q92624</id>
        <label>APPBP2</label>
    </interactant>
    <organismsDiffer>false</organismsDiffer>
    <experiments>3</experiments>
</comment>
<comment type="interaction">
    <interactant intactId="EBI-2340879">
        <id>Q712K3</id>
    </interactant>
    <interactant intactId="EBI-19954058">
        <id>O15499</id>
        <label>GSC2</label>
    </interactant>
    <organismsDiffer>false</organismsDiffer>
    <experiments>3</experiments>
</comment>
<comment type="interaction">
    <interactant intactId="EBI-2340879">
        <id>Q712K3</id>
    </interactant>
    <interactant intactId="EBI-2864512">
        <id>P50221</id>
        <label>MEOX1</label>
    </interactant>
    <organismsDiffer>false</organismsDiffer>
    <experiments>6</experiments>
</comment>
<comment type="interaction">
    <interactant intactId="EBI-2340879">
        <id>Q712K3</id>
    </interactant>
    <interactant intactId="EBI-727004">
        <id>O00560</id>
        <label>SDCBP</label>
    </interactant>
    <organismsDiffer>false</organismsDiffer>
    <experiments>3</experiments>
</comment>
<comment type="similarity">
    <text evidence="1">Belongs to the ubiquitin-conjugating enzyme family.</text>
</comment>